<accession>Q5PBH8</accession>
<comment type="function">
    <text evidence="1">Part of the Tol-Pal system, which plays a role in outer membrane invagination during cell division and is important for maintaining outer membrane integrity.</text>
</comment>
<comment type="subunit">
    <text evidence="1">The Tol-Pal system is composed of five core proteins: the inner membrane proteins TolA, TolQ and TolR, the periplasmic protein TolB and the outer membrane protein Pal. They form a network linking the inner and outer membranes and the peptidoglycan layer.</text>
</comment>
<comment type="subcellular location">
    <subcellularLocation>
        <location evidence="1">Periplasm</location>
    </subcellularLocation>
</comment>
<comment type="similarity">
    <text evidence="1">Belongs to the TolB family.</text>
</comment>
<organism>
    <name type="scientific">Anaplasma marginale (strain St. Maries)</name>
    <dbReference type="NCBI Taxonomy" id="234826"/>
    <lineage>
        <taxon>Bacteria</taxon>
        <taxon>Pseudomonadati</taxon>
        <taxon>Pseudomonadota</taxon>
        <taxon>Alphaproteobacteria</taxon>
        <taxon>Rickettsiales</taxon>
        <taxon>Anaplasmataceae</taxon>
        <taxon>Anaplasma</taxon>
    </lineage>
</organism>
<keyword id="KW-0131">Cell cycle</keyword>
<keyword id="KW-0132">Cell division</keyword>
<keyword id="KW-0574">Periplasm</keyword>
<keyword id="KW-0732">Signal</keyword>
<proteinExistence type="inferred from homology"/>
<feature type="signal peptide" evidence="1">
    <location>
        <begin position="1"/>
        <end position="25"/>
    </location>
</feature>
<feature type="chain" id="PRO_0000034621" description="Tol-Pal system protein TolB" evidence="1">
    <location>
        <begin position="26"/>
        <end position="441"/>
    </location>
</feature>
<reference key="1">
    <citation type="journal article" date="2005" name="Proc. Natl. Acad. Sci. U.S.A.">
        <title>Complete genome sequencing of Anaplasma marginale reveals that the surface is skewed to two superfamilies of outer membrane proteins.</title>
        <authorList>
            <person name="Brayton K.A."/>
            <person name="Kappmeyer L.S."/>
            <person name="Herndon D.R."/>
            <person name="Dark M.J."/>
            <person name="Tibbals D.L."/>
            <person name="Palmer G.H."/>
            <person name="McGuire T.C."/>
            <person name="Knowles D.P. Jr."/>
        </authorList>
    </citation>
    <scope>NUCLEOTIDE SEQUENCE [LARGE SCALE GENOMIC DNA]</scope>
    <source>
        <strain>St. Maries</strain>
    </source>
</reference>
<evidence type="ECO:0000255" key="1">
    <source>
        <dbReference type="HAMAP-Rule" id="MF_00671"/>
    </source>
</evidence>
<sequence>MRIFFFAYVLPTVISLLLGCQGAIAALGVDITKGNTEKVKISVAPMHSSTNLEKEIGKSCIRVMLRDLNSTGIFDASWKLPAGGFSTTSEGMPDSNAWTSVAKDVLVTGSIKEFAQGRVKVKLFIWDVASGRQLSGKSFNFATGNWRRAAHSMSDSIYSRITGEGGYFNTRIAYVAETGLPGSRRIAIMDQDGANNIYITGRGEFVSTPRFSPDARNLVYMSYAKSGGSVVLHDLETGYSTALGGVRGVNSSPRFSPDGRHVLLSESAQGSTNIYSIDLKSGKSTRLTNDRSINTSASYSPDKKSIVFNSDRSGRPQLYVMNADGTNQRRISSGKGGYSAPAWSPRGDWIAFTKTEGKSFHVGVMKPDGSGERLLAKGYMVDSPSWSPNGRVILFTQQDPPSATHPFRSRLVTVDITGTNTQILDVPTNASNAHWSPVLRE</sequence>
<gene>
    <name evidence="1" type="primary">tolB</name>
    <name type="ordered locus">AM244</name>
</gene>
<name>TOLB_ANAMM</name>
<dbReference type="EMBL" id="CP000030">
    <property type="protein sequence ID" value="AAV86351.1"/>
    <property type="molecule type" value="Genomic_DNA"/>
</dbReference>
<dbReference type="RefSeq" id="WP_010263042.1">
    <property type="nucleotide sequence ID" value="NZ_AFMU01000015.1"/>
</dbReference>
<dbReference type="SMR" id="Q5PBH8"/>
<dbReference type="KEGG" id="ama:AM244"/>
<dbReference type="HOGENOM" id="CLU_047123_0_0_5"/>
<dbReference type="GO" id="GO:0042597">
    <property type="term" value="C:periplasmic space"/>
    <property type="evidence" value="ECO:0007669"/>
    <property type="project" value="UniProtKB-SubCell"/>
</dbReference>
<dbReference type="GO" id="GO:0051301">
    <property type="term" value="P:cell division"/>
    <property type="evidence" value="ECO:0007669"/>
    <property type="project" value="UniProtKB-UniRule"/>
</dbReference>
<dbReference type="GO" id="GO:0017038">
    <property type="term" value="P:protein import"/>
    <property type="evidence" value="ECO:0007669"/>
    <property type="project" value="InterPro"/>
</dbReference>
<dbReference type="Gene3D" id="2.120.10.30">
    <property type="entry name" value="TolB, C-terminal domain"/>
    <property type="match status" value="1"/>
</dbReference>
<dbReference type="Gene3D" id="3.40.50.10070">
    <property type="entry name" value="TolB, N-terminal domain"/>
    <property type="match status" value="1"/>
</dbReference>
<dbReference type="HAMAP" id="MF_00671">
    <property type="entry name" value="TolB"/>
    <property type="match status" value="1"/>
</dbReference>
<dbReference type="InterPro" id="IPR011042">
    <property type="entry name" value="6-blade_b-propeller_TolB-like"/>
</dbReference>
<dbReference type="InterPro" id="IPR011659">
    <property type="entry name" value="PD40"/>
</dbReference>
<dbReference type="InterPro" id="IPR014167">
    <property type="entry name" value="Tol-Pal_TolB"/>
</dbReference>
<dbReference type="InterPro" id="IPR007195">
    <property type="entry name" value="TolB_N"/>
</dbReference>
<dbReference type="NCBIfam" id="TIGR02800">
    <property type="entry name" value="propeller_TolB"/>
    <property type="match status" value="1"/>
</dbReference>
<dbReference type="PANTHER" id="PTHR36842:SF1">
    <property type="entry name" value="PROTEIN TOLB"/>
    <property type="match status" value="1"/>
</dbReference>
<dbReference type="PANTHER" id="PTHR36842">
    <property type="entry name" value="PROTEIN TOLB HOMOLOG"/>
    <property type="match status" value="1"/>
</dbReference>
<dbReference type="Pfam" id="PF07676">
    <property type="entry name" value="PD40"/>
    <property type="match status" value="3"/>
</dbReference>
<dbReference type="Pfam" id="PF04052">
    <property type="entry name" value="TolB_N"/>
    <property type="match status" value="1"/>
</dbReference>
<dbReference type="SUPFAM" id="SSF52964">
    <property type="entry name" value="TolB, N-terminal domain"/>
    <property type="match status" value="1"/>
</dbReference>
<dbReference type="SUPFAM" id="SSF69304">
    <property type="entry name" value="Tricorn protease N-terminal domain"/>
    <property type="match status" value="1"/>
</dbReference>
<protein>
    <recommendedName>
        <fullName evidence="1">Tol-Pal system protein TolB</fullName>
    </recommendedName>
</protein>